<comment type="function">
    <text evidence="1">Converts heme B (protoheme IX) to heme O by substitution of the vinyl group on carbon 2 of heme B porphyrin ring with a hydroxyethyl farnesyl side group.</text>
</comment>
<comment type="catalytic activity">
    <reaction evidence="1">
        <text>heme b + (2E,6E)-farnesyl diphosphate + H2O = Fe(II)-heme o + diphosphate</text>
        <dbReference type="Rhea" id="RHEA:28070"/>
        <dbReference type="ChEBI" id="CHEBI:15377"/>
        <dbReference type="ChEBI" id="CHEBI:33019"/>
        <dbReference type="ChEBI" id="CHEBI:60344"/>
        <dbReference type="ChEBI" id="CHEBI:60530"/>
        <dbReference type="ChEBI" id="CHEBI:175763"/>
        <dbReference type="EC" id="2.5.1.141"/>
    </reaction>
</comment>
<comment type="pathway">
    <text evidence="1">Porphyrin-containing compound metabolism; heme O biosynthesis; heme O from protoheme: step 1/1.</text>
</comment>
<comment type="subcellular location">
    <subcellularLocation>
        <location evidence="1">Cell inner membrane</location>
        <topology evidence="1">Multi-pass membrane protein</topology>
    </subcellularLocation>
</comment>
<comment type="miscellaneous">
    <text evidence="1">Carbon 2 of the heme B porphyrin ring is defined according to the Fischer nomenclature.</text>
</comment>
<comment type="similarity">
    <text evidence="1">Belongs to the UbiA prenyltransferase family. Protoheme IX farnesyltransferase subfamily.</text>
</comment>
<proteinExistence type="inferred from homology"/>
<protein>
    <recommendedName>
        <fullName evidence="1">Protoheme IX farnesyltransferase</fullName>
        <ecNumber evidence="1">2.5.1.141</ecNumber>
    </recommendedName>
    <alternativeName>
        <fullName evidence="1">Heme B farnesyltransferase</fullName>
    </alternativeName>
    <alternativeName>
        <fullName evidence="1">Heme O synthase</fullName>
    </alternativeName>
</protein>
<evidence type="ECO:0000255" key="1">
    <source>
        <dbReference type="HAMAP-Rule" id="MF_00154"/>
    </source>
</evidence>
<feature type="chain" id="PRO_0000327050" description="Protoheme IX farnesyltransferase">
    <location>
        <begin position="1"/>
        <end position="295"/>
    </location>
</feature>
<feature type="transmembrane region" description="Helical" evidence="1">
    <location>
        <begin position="30"/>
        <end position="50"/>
    </location>
</feature>
<feature type="transmembrane region" description="Helical" evidence="1">
    <location>
        <begin position="51"/>
        <end position="71"/>
    </location>
</feature>
<feature type="transmembrane region" description="Helical" evidence="1">
    <location>
        <begin position="93"/>
        <end position="115"/>
    </location>
</feature>
<feature type="transmembrane region" description="Helical" evidence="1">
    <location>
        <begin position="119"/>
        <end position="136"/>
    </location>
</feature>
<feature type="transmembrane region" description="Helical" evidence="1">
    <location>
        <begin position="148"/>
        <end position="168"/>
    </location>
</feature>
<feature type="transmembrane region" description="Helical" evidence="1">
    <location>
        <begin position="175"/>
        <end position="195"/>
    </location>
</feature>
<feature type="transmembrane region" description="Helical" evidence="1">
    <location>
        <begin position="219"/>
        <end position="239"/>
    </location>
</feature>
<feature type="transmembrane region" description="Helical" evidence="1">
    <location>
        <begin position="244"/>
        <end position="264"/>
    </location>
</feature>
<feature type="transmembrane region" description="Helical" evidence="1">
    <location>
        <begin position="275"/>
        <end position="295"/>
    </location>
</feature>
<name>COXX_EHRRG</name>
<reference key="1">
    <citation type="journal article" date="2006" name="J. Bacteriol.">
        <title>Comparative genomic analysis of three strains of Ehrlichia ruminantium reveals an active process of genome size plasticity.</title>
        <authorList>
            <person name="Frutos R."/>
            <person name="Viari A."/>
            <person name="Ferraz C."/>
            <person name="Morgat A."/>
            <person name="Eychenie S."/>
            <person name="Kandassamy Y."/>
            <person name="Chantal I."/>
            <person name="Bensaid A."/>
            <person name="Coissac E."/>
            <person name="Vachiery N."/>
            <person name="Demaille J."/>
            <person name="Martinez D."/>
        </authorList>
    </citation>
    <scope>NUCLEOTIDE SEQUENCE [LARGE SCALE GENOMIC DNA]</scope>
    <source>
        <strain>Gardel</strain>
    </source>
</reference>
<sequence length="295" mass="32846">MGIQSSTMKLPLIHEILDYWHLLKPKIMYLVVLTGVTGIIIAPGNIHPLIAVISTLCIALGSGAAGAINMWYDSDIDALMTRTKTRPIPAGKISRSSALEVGLVLSFISVTIMMIAVNYISGILLAISIGFYIYVYTMYLKRRTPQNIVIGGAAGALPPIIGWTSVTGSISIESLVLFLIIFMWTPPHFWALSLLNYHEYEKAKIPMLPVTHGIFTTKIHILVYSILLFPITLLPGLFLKDPVLYEITAIPLGLMFVVQAFQVFKSSISYHYRVMFTYSIIYLFILFTCIMLSSF</sequence>
<keyword id="KW-0997">Cell inner membrane</keyword>
<keyword id="KW-1003">Cell membrane</keyword>
<keyword id="KW-0350">Heme biosynthesis</keyword>
<keyword id="KW-0472">Membrane</keyword>
<keyword id="KW-0808">Transferase</keyword>
<keyword id="KW-0812">Transmembrane</keyword>
<keyword id="KW-1133">Transmembrane helix</keyword>
<dbReference type="EC" id="2.5.1.141" evidence="1"/>
<dbReference type="EMBL" id="CR925677">
    <property type="protein sequence ID" value="CAI28261.1"/>
    <property type="molecule type" value="Genomic_DNA"/>
</dbReference>
<dbReference type="RefSeq" id="WP_011255870.1">
    <property type="nucleotide sequence ID" value="NC_006831.1"/>
</dbReference>
<dbReference type="SMR" id="Q5FGC3"/>
<dbReference type="KEGG" id="erg:ERGA_CDS_08090"/>
<dbReference type="HOGENOM" id="CLU_029631_0_2_5"/>
<dbReference type="OrthoDB" id="9814417at2"/>
<dbReference type="UniPathway" id="UPA00834">
    <property type="reaction ID" value="UER00712"/>
</dbReference>
<dbReference type="Proteomes" id="UP000000533">
    <property type="component" value="Chromosome"/>
</dbReference>
<dbReference type="GO" id="GO:0005886">
    <property type="term" value="C:plasma membrane"/>
    <property type="evidence" value="ECO:0007669"/>
    <property type="project" value="UniProtKB-SubCell"/>
</dbReference>
<dbReference type="GO" id="GO:0008495">
    <property type="term" value="F:protoheme IX farnesyltransferase activity"/>
    <property type="evidence" value="ECO:0007669"/>
    <property type="project" value="UniProtKB-UniRule"/>
</dbReference>
<dbReference type="GO" id="GO:0048034">
    <property type="term" value="P:heme O biosynthetic process"/>
    <property type="evidence" value="ECO:0007669"/>
    <property type="project" value="UniProtKB-UniRule"/>
</dbReference>
<dbReference type="CDD" id="cd13957">
    <property type="entry name" value="PT_UbiA_Cox10"/>
    <property type="match status" value="1"/>
</dbReference>
<dbReference type="Gene3D" id="1.10.357.140">
    <property type="entry name" value="UbiA prenyltransferase"/>
    <property type="match status" value="1"/>
</dbReference>
<dbReference type="HAMAP" id="MF_00154">
    <property type="entry name" value="CyoE_CtaB"/>
    <property type="match status" value="1"/>
</dbReference>
<dbReference type="InterPro" id="IPR006369">
    <property type="entry name" value="Protohaem_IX_farnesylTrfase"/>
</dbReference>
<dbReference type="InterPro" id="IPR000537">
    <property type="entry name" value="UbiA_prenyltransferase"/>
</dbReference>
<dbReference type="InterPro" id="IPR030470">
    <property type="entry name" value="UbiA_prenylTrfase_CS"/>
</dbReference>
<dbReference type="InterPro" id="IPR044878">
    <property type="entry name" value="UbiA_sf"/>
</dbReference>
<dbReference type="NCBIfam" id="TIGR01473">
    <property type="entry name" value="cyoE_ctaB"/>
    <property type="match status" value="1"/>
</dbReference>
<dbReference type="NCBIfam" id="NF003349">
    <property type="entry name" value="PRK04375.1-2"/>
    <property type="match status" value="1"/>
</dbReference>
<dbReference type="PANTHER" id="PTHR43448:SF7">
    <property type="entry name" value="4-HYDROXYBENZOATE SOLANESYLTRANSFERASE"/>
    <property type="match status" value="1"/>
</dbReference>
<dbReference type="PANTHER" id="PTHR43448">
    <property type="entry name" value="PROTOHEME IX FARNESYLTRANSFERASE, MITOCHONDRIAL"/>
    <property type="match status" value="1"/>
</dbReference>
<dbReference type="Pfam" id="PF01040">
    <property type="entry name" value="UbiA"/>
    <property type="match status" value="1"/>
</dbReference>
<dbReference type="PROSITE" id="PS00943">
    <property type="entry name" value="UBIA"/>
    <property type="match status" value="1"/>
</dbReference>
<organism>
    <name type="scientific">Ehrlichia ruminantium (strain Gardel)</name>
    <dbReference type="NCBI Taxonomy" id="302409"/>
    <lineage>
        <taxon>Bacteria</taxon>
        <taxon>Pseudomonadati</taxon>
        <taxon>Pseudomonadota</taxon>
        <taxon>Alphaproteobacteria</taxon>
        <taxon>Rickettsiales</taxon>
        <taxon>Anaplasmataceae</taxon>
        <taxon>Ehrlichia</taxon>
    </lineage>
</organism>
<gene>
    <name evidence="1" type="primary">ctaB</name>
    <name type="ordered locus">ERGA_CDS_08090</name>
</gene>
<accession>Q5FGC3</accession>